<name>CYB_LORTA</name>
<dbReference type="EMBL" id="U53581">
    <property type="protein sequence ID" value="AAC50527.1"/>
    <property type="molecule type" value="Genomic_DNA"/>
</dbReference>
<dbReference type="EMBL" id="AY441475">
    <property type="protein sequence ID" value="AAS00156.1"/>
    <property type="molecule type" value="Genomic_DNA"/>
</dbReference>
<dbReference type="SMR" id="Q34952"/>
<dbReference type="GO" id="GO:0005743">
    <property type="term" value="C:mitochondrial inner membrane"/>
    <property type="evidence" value="ECO:0007669"/>
    <property type="project" value="UniProtKB-SubCell"/>
</dbReference>
<dbReference type="GO" id="GO:0045275">
    <property type="term" value="C:respiratory chain complex III"/>
    <property type="evidence" value="ECO:0007669"/>
    <property type="project" value="InterPro"/>
</dbReference>
<dbReference type="GO" id="GO:0046872">
    <property type="term" value="F:metal ion binding"/>
    <property type="evidence" value="ECO:0007669"/>
    <property type="project" value="UniProtKB-KW"/>
</dbReference>
<dbReference type="GO" id="GO:0008121">
    <property type="term" value="F:ubiquinol-cytochrome-c reductase activity"/>
    <property type="evidence" value="ECO:0007669"/>
    <property type="project" value="InterPro"/>
</dbReference>
<dbReference type="GO" id="GO:0006122">
    <property type="term" value="P:mitochondrial electron transport, ubiquinol to cytochrome c"/>
    <property type="evidence" value="ECO:0007669"/>
    <property type="project" value="TreeGrafter"/>
</dbReference>
<dbReference type="CDD" id="cd00290">
    <property type="entry name" value="cytochrome_b_C"/>
    <property type="match status" value="1"/>
</dbReference>
<dbReference type="CDD" id="cd00284">
    <property type="entry name" value="Cytochrome_b_N"/>
    <property type="match status" value="1"/>
</dbReference>
<dbReference type="FunFam" id="1.20.810.10:FF:000002">
    <property type="entry name" value="Cytochrome b"/>
    <property type="match status" value="1"/>
</dbReference>
<dbReference type="Gene3D" id="1.20.810.10">
    <property type="entry name" value="Cytochrome Bc1 Complex, Chain C"/>
    <property type="match status" value="1"/>
</dbReference>
<dbReference type="InterPro" id="IPR005798">
    <property type="entry name" value="Cyt_b/b6_C"/>
</dbReference>
<dbReference type="InterPro" id="IPR036150">
    <property type="entry name" value="Cyt_b/b6_C_sf"/>
</dbReference>
<dbReference type="InterPro" id="IPR005797">
    <property type="entry name" value="Cyt_b/b6_N"/>
</dbReference>
<dbReference type="InterPro" id="IPR027387">
    <property type="entry name" value="Cytb/b6-like_sf"/>
</dbReference>
<dbReference type="InterPro" id="IPR030689">
    <property type="entry name" value="Cytochrome_b"/>
</dbReference>
<dbReference type="InterPro" id="IPR048260">
    <property type="entry name" value="Cytochrome_b_C_euk/bac"/>
</dbReference>
<dbReference type="InterPro" id="IPR048259">
    <property type="entry name" value="Cytochrome_b_N_euk/bac"/>
</dbReference>
<dbReference type="InterPro" id="IPR016174">
    <property type="entry name" value="Di-haem_cyt_TM"/>
</dbReference>
<dbReference type="PANTHER" id="PTHR19271">
    <property type="entry name" value="CYTOCHROME B"/>
    <property type="match status" value="1"/>
</dbReference>
<dbReference type="PANTHER" id="PTHR19271:SF16">
    <property type="entry name" value="CYTOCHROME B"/>
    <property type="match status" value="1"/>
</dbReference>
<dbReference type="Pfam" id="PF00032">
    <property type="entry name" value="Cytochrom_B_C"/>
    <property type="match status" value="1"/>
</dbReference>
<dbReference type="Pfam" id="PF00033">
    <property type="entry name" value="Cytochrome_B"/>
    <property type="match status" value="1"/>
</dbReference>
<dbReference type="PIRSF" id="PIRSF038885">
    <property type="entry name" value="COB"/>
    <property type="match status" value="1"/>
</dbReference>
<dbReference type="SUPFAM" id="SSF81648">
    <property type="entry name" value="a domain/subunit of cytochrome bc1 complex (Ubiquinol-cytochrome c reductase)"/>
    <property type="match status" value="1"/>
</dbReference>
<dbReference type="SUPFAM" id="SSF81342">
    <property type="entry name" value="Transmembrane di-heme cytochromes"/>
    <property type="match status" value="1"/>
</dbReference>
<dbReference type="PROSITE" id="PS51003">
    <property type="entry name" value="CYTB_CTER"/>
    <property type="match status" value="1"/>
</dbReference>
<dbReference type="PROSITE" id="PS51002">
    <property type="entry name" value="CYTB_NTER"/>
    <property type="match status" value="1"/>
</dbReference>
<geneLocation type="mitochondrion"/>
<gene>
    <name type="primary">MT-CYB</name>
    <name type="synonym">COB</name>
    <name type="synonym">CYTB</name>
    <name type="synonym">MTCYB</name>
</gene>
<evidence type="ECO:0000250" key="1"/>
<evidence type="ECO:0000250" key="2">
    <source>
        <dbReference type="UniProtKB" id="P00157"/>
    </source>
</evidence>
<evidence type="ECO:0000255" key="3">
    <source>
        <dbReference type="PROSITE-ProRule" id="PRU00967"/>
    </source>
</evidence>
<evidence type="ECO:0000255" key="4">
    <source>
        <dbReference type="PROSITE-ProRule" id="PRU00968"/>
    </source>
</evidence>
<evidence type="ECO:0000305" key="5"/>
<comment type="function">
    <text evidence="2">Component of the ubiquinol-cytochrome c reductase complex (complex III or cytochrome b-c1 complex) that is part of the mitochondrial respiratory chain. The b-c1 complex mediates electron transfer from ubiquinol to cytochrome c. Contributes to the generation of a proton gradient across the mitochondrial membrane that is then used for ATP synthesis.</text>
</comment>
<comment type="cofactor">
    <cofactor evidence="2">
        <name>heme b</name>
        <dbReference type="ChEBI" id="CHEBI:60344"/>
    </cofactor>
    <text evidence="2">Binds 2 heme b groups non-covalently.</text>
</comment>
<comment type="subunit">
    <text evidence="2">The cytochrome bc1 complex contains 11 subunits: 3 respiratory subunits (MT-CYB, CYC1 and UQCRFS1), 2 core proteins (UQCRC1 and UQCRC2) and 6 low-molecular weight proteins (UQCRH/QCR6, UQCRB/QCR7, UQCRQ/QCR8, UQCR10/QCR9, UQCR11/QCR10 and a cleavage product of UQCRFS1). This cytochrome bc1 complex then forms a dimer.</text>
</comment>
<comment type="subcellular location">
    <subcellularLocation>
        <location evidence="2">Mitochondrion inner membrane</location>
        <topology evidence="2">Multi-pass membrane protein</topology>
    </subcellularLocation>
</comment>
<comment type="miscellaneous">
    <text evidence="1">Heme 1 (or BL or b562) is low-potential and absorbs at about 562 nm, and heme 2 (or BH or b566) is high-potential and absorbs at about 566 nm.</text>
</comment>
<comment type="similarity">
    <text evidence="3 4">Belongs to the cytochrome b family.</text>
</comment>
<comment type="caution">
    <text evidence="2">The full-length protein contains only eight transmembrane helices, not nine as predicted by bioinformatics tools.</text>
</comment>
<proteinExistence type="inferred from homology"/>
<protein>
    <recommendedName>
        <fullName>Cytochrome b</fullName>
    </recommendedName>
    <alternativeName>
        <fullName>Complex III subunit 3</fullName>
    </alternativeName>
    <alternativeName>
        <fullName>Complex III subunit III</fullName>
    </alternativeName>
    <alternativeName>
        <fullName>Cytochrome b-c1 complex subunit 3</fullName>
    </alternativeName>
    <alternativeName>
        <fullName>Ubiquinol-cytochrome-c reductase complex cytochrome b subunit</fullName>
    </alternativeName>
</protein>
<sequence>MTNIRKTHPLTKIINHSFIDLPTPSNISSWWNFGSLLGLCLVIQIMTGLFLAMHYTPDTTTAFSSVTHICRDVNYGWMIRYLHANGASMFFMCLFIHIGRGIYYGSFTFLETWNIGIMLLFTVMATAFMGYVLPWGQMSFWGATVITNLLSAIPYIGTNLVEWIWGGFSVDKATLTRFFAFHFILPFIITALTAIHLLFLHESGSNNPSGMTSDSDKIPFHPYYTLKDILGVIALLITLSTLVLFSPDLLGDPDNYTPANPLNTPPHIKPEWYFLFAYAILRSIPNKLGGVLALISSILILALMPFLNMAKQRSMMFRPLSQCLFWTLVANLMVLTWIGGQPVENPFIIIGQLASIMYFSTILIFMPLTNLLENKLLKW</sequence>
<organism>
    <name type="scientific">Loris tardigradus</name>
    <name type="common">Slender loris</name>
    <dbReference type="NCBI Taxonomy" id="9468"/>
    <lineage>
        <taxon>Eukaryota</taxon>
        <taxon>Metazoa</taxon>
        <taxon>Chordata</taxon>
        <taxon>Craniata</taxon>
        <taxon>Vertebrata</taxon>
        <taxon>Euteleostomi</taxon>
        <taxon>Mammalia</taxon>
        <taxon>Eutheria</taxon>
        <taxon>Euarchontoglires</taxon>
        <taxon>Primates</taxon>
        <taxon>Strepsirrhini</taxon>
        <taxon>Lorisiformes</taxon>
        <taxon>Lorisidae</taxon>
        <taxon>Loris</taxon>
    </lineage>
</organism>
<reference key="1">
    <citation type="journal article" date="1996" name="Proc. Natl. Acad. Sci. U.S.A.">
        <title>Ancient single origin for Malagasy primates.</title>
        <authorList>
            <person name="Yoder A.D."/>
            <person name="Cartmill M."/>
            <person name="Ruvolo M."/>
            <person name="Smith K."/>
            <person name="Vilgalys R."/>
        </authorList>
    </citation>
    <scope>NUCLEOTIDE SEQUENCE [GENOMIC DNA]</scope>
</reference>
<reference key="2">
    <citation type="submission" date="2003-10" db="EMBL/GenBank/DDBJ databases">
        <title>61 primate SINEs and the evolution of strepsirrhines.</title>
        <authorList>
            <person name="Roos C."/>
            <person name="Schmitz J."/>
            <person name="Zischler H."/>
        </authorList>
    </citation>
    <scope>NUCLEOTIDE SEQUENCE [GENOMIC DNA]</scope>
</reference>
<accession>Q34952</accession>
<accession>Q5VJ38</accession>
<keyword id="KW-0249">Electron transport</keyword>
<keyword id="KW-0349">Heme</keyword>
<keyword id="KW-0408">Iron</keyword>
<keyword id="KW-0472">Membrane</keyword>
<keyword id="KW-0479">Metal-binding</keyword>
<keyword id="KW-0496">Mitochondrion</keyword>
<keyword id="KW-0999">Mitochondrion inner membrane</keyword>
<keyword id="KW-0679">Respiratory chain</keyword>
<keyword id="KW-0812">Transmembrane</keyword>
<keyword id="KW-1133">Transmembrane helix</keyword>
<keyword id="KW-0813">Transport</keyword>
<keyword id="KW-0830">Ubiquinone</keyword>
<feature type="chain" id="PRO_0000061135" description="Cytochrome b">
    <location>
        <begin position="1"/>
        <end position="379"/>
    </location>
</feature>
<feature type="transmembrane region" description="Helical" evidence="2">
    <location>
        <begin position="33"/>
        <end position="53"/>
    </location>
</feature>
<feature type="transmembrane region" description="Helical" evidence="2">
    <location>
        <begin position="77"/>
        <end position="98"/>
    </location>
</feature>
<feature type="transmembrane region" description="Helical" evidence="2">
    <location>
        <begin position="113"/>
        <end position="133"/>
    </location>
</feature>
<feature type="transmembrane region" description="Helical" evidence="2">
    <location>
        <begin position="178"/>
        <end position="198"/>
    </location>
</feature>
<feature type="transmembrane region" description="Helical" evidence="2">
    <location>
        <begin position="226"/>
        <end position="246"/>
    </location>
</feature>
<feature type="transmembrane region" description="Helical" evidence="2">
    <location>
        <begin position="288"/>
        <end position="308"/>
    </location>
</feature>
<feature type="transmembrane region" description="Helical" evidence="2">
    <location>
        <begin position="320"/>
        <end position="340"/>
    </location>
</feature>
<feature type="transmembrane region" description="Helical" evidence="2">
    <location>
        <begin position="347"/>
        <end position="367"/>
    </location>
</feature>
<feature type="binding site" description="axial binding residue" evidence="2">
    <location>
        <position position="83"/>
    </location>
    <ligand>
        <name>heme b</name>
        <dbReference type="ChEBI" id="CHEBI:60344"/>
        <label>b562</label>
    </ligand>
    <ligandPart>
        <name>Fe</name>
        <dbReference type="ChEBI" id="CHEBI:18248"/>
    </ligandPart>
</feature>
<feature type="binding site" description="axial binding residue" evidence="2">
    <location>
        <position position="97"/>
    </location>
    <ligand>
        <name>heme b</name>
        <dbReference type="ChEBI" id="CHEBI:60344"/>
        <label>b566</label>
    </ligand>
    <ligandPart>
        <name>Fe</name>
        <dbReference type="ChEBI" id="CHEBI:18248"/>
    </ligandPart>
</feature>
<feature type="binding site" description="axial binding residue" evidence="2">
    <location>
        <position position="182"/>
    </location>
    <ligand>
        <name>heme b</name>
        <dbReference type="ChEBI" id="CHEBI:60344"/>
        <label>b562</label>
    </ligand>
    <ligandPart>
        <name>Fe</name>
        <dbReference type="ChEBI" id="CHEBI:18248"/>
    </ligandPart>
</feature>
<feature type="binding site" description="axial binding residue" evidence="2">
    <location>
        <position position="196"/>
    </location>
    <ligand>
        <name>heme b</name>
        <dbReference type="ChEBI" id="CHEBI:60344"/>
        <label>b566</label>
    </ligand>
    <ligandPart>
        <name>Fe</name>
        <dbReference type="ChEBI" id="CHEBI:18248"/>
    </ligandPart>
</feature>
<feature type="binding site" evidence="2">
    <location>
        <position position="201"/>
    </location>
    <ligand>
        <name>a ubiquinone</name>
        <dbReference type="ChEBI" id="CHEBI:16389"/>
    </ligand>
</feature>
<feature type="sequence conflict" description="In Ref. 2; AAS00156." evidence="5" ref="2">
    <original>I</original>
    <variation>V</variation>
    <location>
        <position position="43"/>
    </location>
</feature>
<feature type="sequence conflict" description="In Ref. 2; AAS00156." evidence="5" ref="2">
    <original>I</original>
    <variation>N</variation>
    <location>
        <position position="98"/>
    </location>
</feature>
<feature type="sequence conflict" description="In Ref. 2; AAS00156." evidence="5" ref="2">
    <original>M</original>
    <variation>L</variation>
    <location>
        <position position="118"/>
    </location>
</feature>
<feature type="sequence conflict" description="In Ref. 2; AAS00156." evidence="5" ref="2">
    <original>IT</original>
    <variation>TI</variation>
    <location>
        <begin position="237"/>
        <end position="238"/>
    </location>
</feature>
<feature type="sequence conflict" description="In Ref. 2; AAS00156." evidence="5" ref="2">
    <original>L</original>
    <variation>S</variation>
    <location>
        <position position="376"/>
    </location>
</feature>